<sequence>MYKEIIAYLKLKYGKVKPQSVIGKIIAKNPELKAKIKELIPIIEQEIKEVEQMDIEQIKELAKAYEQTIEKKEKDIEIPVKDKVITRFAPNPSGLLHIGHARAIVLNHYIAKKYNGQFILRIEDTDPDVKKPMIEAYELIPKDVEWLIQEKPDKIVVQSDRLDIYYKYIEELIKQGKAYVCLCKAEEFREYRNKGLPCPHRNQSIEENLELWSKMLKGEFKKGEAVVRLKTDLTHKDPGVRDFPIARIVENPHPRIGYKPVFPLYNFAVVIDDHLLGITHVIRMKEHTNNAIKQSFIYKAFGWEEPIYLEYGALLTDMPTHKSEIRKLIEQKQIEGWDDIRLPTLIALRRRGILPEAIYEYIVKDVGLNKADIKVDWNKIYYYHKIRIDKQTPRYFMIRDPIAIVIENYDDIIDKFEIKNGIPYKKISKHPDVDLGYRELPIKEVLYIDKRDAERLKQKPLRLFELFNIKFVGEIEIEYGDEYSKTKEKAYAVRVISFDVQEAIKNKYPIVQWLPEYEETTLFELDGYKKAYVEPNIKENYVHFIREGYYKRENDKWIFSVK</sequence>
<proteinExistence type="inferred from homology"/>
<dbReference type="EC" id="6.1.1.17" evidence="1"/>
<dbReference type="EMBL" id="AE017199">
    <property type="protein sequence ID" value="AAR39150.1"/>
    <property type="molecule type" value="Genomic_DNA"/>
</dbReference>
<dbReference type="SMR" id="Q74MU5"/>
<dbReference type="STRING" id="228908.NEQ302"/>
<dbReference type="EnsemblBacteria" id="AAR39150">
    <property type="protein sequence ID" value="AAR39150"/>
    <property type="gene ID" value="NEQ302"/>
</dbReference>
<dbReference type="KEGG" id="neq:NEQ302"/>
<dbReference type="PATRIC" id="fig|228908.8.peg.308"/>
<dbReference type="HOGENOM" id="CLU_001882_1_3_2"/>
<dbReference type="Proteomes" id="UP000000578">
    <property type="component" value="Chromosome"/>
</dbReference>
<dbReference type="GO" id="GO:0005829">
    <property type="term" value="C:cytosol"/>
    <property type="evidence" value="ECO:0007669"/>
    <property type="project" value="TreeGrafter"/>
</dbReference>
<dbReference type="GO" id="GO:0032991">
    <property type="term" value="C:protein-containing complex"/>
    <property type="evidence" value="ECO:0007669"/>
    <property type="project" value="UniProtKB-ARBA"/>
</dbReference>
<dbReference type="GO" id="GO:0005524">
    <property type="term" value="F:ATP binding"/>
    <property type="evidence" value="ECO:0007669"/>
    <property type="project" value="UniProtKB-UniRule"/>
</dbReference>
<dbReference type="GO" id="GO:0004818">
    <property type="term" value="F:glutamate-tRNA ligase activity"/>
    <property type="evidence" value="ECO:0007669"/>
    <property type="project" value="UniProtKB-UniRule"/>
</dbReference>
<dbReference type="GO" id="GO:0043604">
    <property type="term" value="P:amide biosynthetic process"/>
    <property type="evidence" value="ECO:0007669"/>
    <property type="project" value="TreeGrafter"/>
</dbReference>
<dbReference type="GO" id="GO:0006424">
    <property type="term" value="P:glutamyl-tRNA aminoacylation"/>
    <property type="evidence" value="ECO:0007669"/>
    <property type="project" value="UniProtKB-UniRule"/>
</dbReference>
<dbReference type="Gene3D" id="3.40.50.620">
    <property type="entry name" value="HUPs"/>
    <property type="match status" value="1"/>
</dbReference>
<dbReference type="Gene3D" id="2.40.240.10">
    <property type="entry name" value="Ribosomal Protein L25, Chain P"/>
    <property type="match status" value="1"/>
</dbReference>
<dbReference type="HAMAP" id="MF_02076">
    <property type="entry name" value="Glu_tRNA_synth_type2"/>
    <property type="match status" value="1"/>
</dbReference>
<dbReference type="InterPro" id="IPR001412">
    <property type="entry name" value="aa-tRNA-synth_I_CS"/>
</dbReference>
<dbReference type="InterPro" id="IPR050132">
    <property type="entry name" value="Gln/Glu-tRNA_Ligase"/>
</dbReference>
<dbReference type="InterPro" id="IPR004526">
    <property type="entry name" value="Glu-tRNA-synth_arc/euk"/>
</dbReference>
<dbReference type="InterPro" id="IPR000924">
    <property type="entry name" value="Glu/Gln-tRNA-synth"/>
</dbReference>
<dbReference type="InterPro" id="IPR020058">
    <property type="entry name" value="Glu/Gln-tRNA-synth_Ib_cat-dom"/>
</dbReference>
<dbReference type="InterPro" id="IPR020059">
    <property type="entry name" value="Glu/Gln-tRNA-synth_Ib_codon-bd"/>
</dbReference>
<dbReference type="InterPro" id="IPR020056">
    <property type="entry name" value="Rbsml_bL25/Gln-tRNA_synth_N"/>
</dbReference>
<dbReference type="InterPro" id="IPR011035">
    <property type="entry name" value="Ribosomal_bL25/Gln-tRNA_synth"/>
</dbReference>
<dbReference type="InterPro" id="IPR014729">
    <property type="entry name" value="Rossmann-like_a/b/a_fold"/>
</dbReference>
<dbReference type="NCBIfam" id="TIGR00463">
    <property type="entry name" value="gltX_arch"/>
    <property type="match status" value="1"/>
</dbReference>
<dbReference type="NCBIfam" id="NF003169">
    <property type="entry name" value="PRK04156.1"/>
    <property type="match status" value="1"/>
</dbReference>
<dbReference type="PANTHER" id="PTHR43097:SF5">
    <property type="entry name" value="GLUTAMATE--TRNA LIGASE"/>
    <property type="match status" value="1"/>
</dbReference>
<dbReference type="PANTHER" id="PTHR43097">
    <property type="entry name" value="GLUTAMINE-TRNA LIGASE"/>
    <property type="match status" value="1"/>
</dbReference>
<dbReference type="Pfam" id="PF00749">
    <property type="entry name" value="tRNA-synt_1c"/>
    <property type="match status" value="1"/>
</dbReference>
<dbReference type="Pfam" id="PF03950">
    <property type="entry name" value="tRNA-synt_1c_C"/>
    <property type="match status" value="1"/>
</dbReference>
<dbReference type="PRINTS" id="PR00987">
    <property type="entry name" value="TRNASYNTHGLU"/>
</dbReference>
<dbReference type="SUPFAM" id="SSF52374">
    <property type="entry name" value="Nucleotidylyl transferase"/>
    <property type="match status" value="1"/>
</dbReference>
<dbReference type="SUPFAM" id="SSF50715">
    <property type="entry name" value="Ribosomal protein L25-like"/>
    <property type="match status" value="1"/>
</dbReference>
<dbReference type="PROSITE" id="PS00178">
    <property type="entry name" value="AA_TRNA_LIGASE_I"/>
    <property type="match status" value="1"/>
</dbReference>
<name>SYE_NANEQ</name>
<evidence type="ECO:0000255" key="1">
    <source>
        <dbReference type="HAMAP-Rule" id="MF_02076"/>
    </source>
</evidence>
<gene>
    <name evidence="1" type="primary">gltX</name>
    <name type="ordered locus">NEQ302</name>
</gene>
<protein>
    <recommendedName>
        <fullName evidence="1">Glutamate--tRNA ligase</fullName>
        <ecNumber evidence="1">6.1.1.17</ecNumber>
    </recommendedName>
    <alternativeName>
        <fullName evidence="1">Glutamyl-tRNA synthetase</fullName>
        <shortName evidence="1">GluRS</shortName>
    </alternativeName>
</protein>
<accession>Q74MU5</accession>
<reference key="1">
    <citation type="journal article" date="2003" name="Proc. Natl. Acad. Sci. U.S.A.">
        <title>The genome of Nanoarchaeum equitans: insights into early archaeal evolution and derived parasitism.</title>
        <authorList>
            <person name="Waters E."/>
            <person name="Hohn M.J."/>
            <person name="Ahel I."/>
            <person name="Graham D.E."/>
            <person name="Adams M.D."/>
            <person name="Barnstead M."/>
            <person name="Beeson K.Y."/>
            <person name="Bibbs L."/>
            <person name="Bolanos R."/>
            <person name="Keller M."/>
            <person name="Kretz K."/>
            <person name="Lin X."/>
            <person name="Mathur E."/>
            <person name="Ni J."/>
            <person name="Podar M."/>
            <person name="Richardson T."/>
            <person name="Sutton G.G."/>
            <person name="Simon M."/>
            <person name="Soell D."/>
            <person name="Stetter K.O."/>
            <person name="Short J.M."/>
            <person name="Noorderwier M."/>
        </authorList>
    </citation>
    <scope>NUCLEOTIDE SEQUENCE [LARGE SCALE GENOMIC DNA]</scope>
    <source>
        <strain>Kin4-M</strain>
    </source>
</reference>
<comment type="function">
    <text evidence="1">Catalyzes the attachment of glutamate to tRNA(Glu) in a two-step reaction: glutamate is first activated by ATP to form Glu-AMP and then transferred to the acceptor end of tRNA(Glu).</text>
</comment>
<comment type="catalytic activity">
    <reaction evidence="1">
        <text>tRNA(Glu) + L-glutamate + ATP = L-glutamyl-tRNA(Glu) + AMP + diphosphate</text>
        <dbReference type="Rhea" id="RHEA:23540"/>
        <dbReference type="Rhea" id="RHEA-COMP:9663"/>
        <dbReference type="Rhea" id="RHEA-COMP:9680"/>
        <dbReference type="ChEBI" id="CHEBI:29985"/>
        <dbReference type="ChEBI" id="CHEBI:30616"/>
        <dbReference type="ChEBI" id="CHEBI:33019"/>
        <dbReference type="ChEBI" id="CHEBI:78442"/>
        <dbReference type="ChEBI" id="CHEBI:78520"/>
        <dbReference type="ChEBI" id="CHEBI:456215"/>
        <dbReference type="EC" id="6.1.1.17"/>
    </reaction>
</comment>
<comment type="subcellular location">
    <subcellularLocation>
        <location evidence="1">Cytoplasm</location>
    </subcellularLocation>
</comment>
<comment type="similarity">
    <text evidence="1">Belongs to the class-I aminoacyl-tRNA synthetase family. Glutamate--tRNA ligase type 2 subfamily.</text>
</comment>
<organism>
    <name type="scientific">Nanoarchaeum equitans (strain Kin4-M)</name>
    <dbReference type="NCBI Taxonomy" id="228908"/>
    <lineage>
        <taxon>Archaea</taxon>
        <taxon>Nanobdellota</taxon>
        <taxon>Candidatus Nanoarchaeia</taxon>
        <taxon>Nanoarchaeales</taxon>
        <taxon>Nanoarchaeaceae</taxon>
        <taxon>Nanoarchaeum</taxon>
    </lineage>
</organism>
<keyword id="KW-0030">Aminoacyl-tRNA synthetase</keyword>
<keyword id="KW-0067">ATP-binding</keyword>
<keyword id="KW-0963">Cytoplasm</keyword>
<keyword id="KW-0436">Ligase</keyword>
<keyword id="KW-0547">Nucleotide-binding</keyword>
<keyword id="KW-0648">Protein biosynthesis</keyword>
<keyword id="KW-1185">Reference proteome</keyword>
<feature type="chain" id="PRO_0000119723" description="Glutamate--tRNA ligase">
    <location>
        <begin position="1"/>
        <end position="562"/>
    </location>
</feature>
<feature type="short sequence motif" description="'HIGH' region" evidence="1">
    <location>
        <begin position="90"/>
        <end position="100"/>
    </location>
</feature>